<reference key="1">
    <citation type="journal article" date="2004" name="Proc. Natl. Acad. Sci. U.S.A.">
        <title>Insights into the evolution of Yersinia pestis through whole-genome comparison with Yersinia pseudotuberculosis.</title>
        <authorList>
            <person name="Chain P.S.G."/>
            <person name="Carniel E."/>
            <person name="Larimer F.W."/>
            <person name="Lamerdin J."/>
            <person name="Stoutland P.O."/>
            <person name="Regala W.M."/>
            <person name="Georgescu A.M."/>
            <person name="Vergez L.M."/>
            <person name="Land M.L."/>
            <person name="Motin V.L."/>
            <person name="Brubaker R.R."/>
            <person name="Fowler J."/>
            <person name="Hinnebusch J."/>
            <person name="Marceau M."/>
            <person name="Medigue C."/>
            <person name="Simonet M."/>
            <person name="Chenal-Francisque V."/>
            <person name="Souza B."/>
            <person name="Dacheux D."/>
            <person name="Elliott J.M."/>
            <person name="Derbise A."/>
            <person name="Hauser L.J."/>
            <person name="Garcia E."/>
        </authorList>
    </citation>
    <scope>NUCLEOTIDE SEQUENCE [LARGE SCALE GENOMIC DNA]</scope>
    <source>
        <strain>IP32953</strain>
    </source>
</reference>
<comment type="function">
    <text evidence="1">Hydrolyzes ribosome-free peptidyl-tRNAs (with 1 or more amino acids incorporated), which drop off the ribosome during protein synthesis, or as a result of ribosome stalling.</text>
</comment>
<comment type="function">
    <text evidence="1">Catalyzes the release of premature peptidyl moieties from peptidyl-tRNA molecules trapped in stalled 50S ribosomal subunits, and thus maintains levels of free tRNAs and 50S ribosomes.</text>
</comment>
<comment type="catalytic activity">
    <reaction evidence="1">
        <text>an N-acyl-L-alpha-aminoacyl-tRNA + H2O = an N-acyl-L-amino acid + a tRNA + H(+)</text>
        <dbReference type="Rhea" id="RHEA:54448"/>
        <dbReference type="Rhea" id="RHEA-COMP:10123"/>
        <dbReference type="Rhea" id="RHEA-COMP:13883"/>
        <dbReference type="ChEBI" id="CHEBI:15377"/>
        <dbReference type="ChEBI" id="CHEBI:15378"/>
        <dbReference type="ChEBI" id="CHEBI:59874"/>
        <dbReference type="ChEBI" id="CHEBI:78442"/>
        <dbReference type="ChEBI" id="CHEBI:138191"/>
        <dbReference type="EC" id="3.1.1.29"/>
    </reaction>
</comment>
<comment type="subunit">
    <text evidence="1">Monomer.</text>
</comment>
<comment type="subcellular location">
    <subcellularLocation>
        <location evidence="1">Cytoplasm</location>
    </subcellularLocation>
</comment>
<comment type="similarity">
    <text evidence="1">Belongs to the PTH family.</text>
</comment>
<protein>
    <recommendedName>
        <fullName evidence="1">Peptidyl-tRNA hydrolase</fullName>
        <shortName evidence="1">Pth</shortName>
        <ecNumber evidence="1">3.1.1.29</ecNumber>
    </recommendedName>
</protein>
<keyword id="KW-0963">Cytoplasm</keyword>
<keyword id="KW-0378">Hydrolase</keyword>
<keyword id="KW-0694">RNA-binding</keyword>
<keyword id="KW-0820">tRNA-binding</keyword>
<accession>Q66AY1</accession>
<organism>
    <name type="scientific">Yersinia pseudotuberculosis serotype I (strain IP32953)</name>
    <dbReference type="NCBI Taxonomy" id="273123"/>
    <lineage>
        <taxon>Bacteria</taxon>
        <taxon>Pseudomonadati</taxon>
        <taxon>Pseudomonadota</taxon>
        <taxon>Gammaproteobacteria</taxon>
        <taxon>Enterobacterales</taxon>
        <taxon>Yersiniaceae</taxon>
        <taxon>Yersinia</taxon>
    </lineage>
</organism>
<gene>
    <name evidence="1" type="primary">pth</name>
    <name type="ordered locus">YPTB1999</name>
</gene>
<name>PTH_YERPS</name>
<sequence length="196" mass="21271">MSSIKLIVGLANPGAEYAQTRHNAGAWYVDLLAERHNQSLKEESKFFGYTARLNLAGQDIRLLVPATFMNLSGKAVAAMASFYRILPEEILVAHDELDILPGMAKLKLGGGNGGHNGLKDIQNKLGNNPNFYRLRIGIGHPGDKSKVTGFVLGKPPASEQTLIDDAIDESIRCTEVLLNEGMTKAMNRLHAFKASA</sequence>
<proteinExistence type="inferred from homology"/>
<evidence type="ECO:0000255" key="1">
    <source>
        <dbReference type="HAMAP-Rule" id="MF_00083"/>
    </source>
</evidence>
<feature type="chain" id="PRO_0000187864" description="Peptidyl-tRNA hydrolase">
    <location>
        <begin position="1"/>
        <end position="196"/>
    </location>
</feature>
<feature type="active site" description="Proton acceptor" evidence="1">
    <location>
        <position position="22"/>
    </location>
</feature>
<feature type="binding site" evidence="1">
    <location>
        <position position="17"/>
    </location>
    <ligand>
        <name>tRNA</name>
        <dbReference type="ChEBI" id="CHEBI:17843"/>
    </ligand>
</feature>
<feature type="binding site" evidence="1">
    <location>
        <position position="68"/>
    </location>
    <ligand>
        <name>tRNA</name>
        <dbReference type="ChEBI" id="CHEBI:17843"/>
    </ligand>
</feature>
<feature type="binding site" evidence="1">
    <location>
        <position position="70"/>
    </location>
    <ligand>
        <name>tRNA</name>
        <dbReference type="ChEBI" id="CHEBI:17843"/>
    </ligand>
</feature>
<feature type="binding site" evidence="1">
    <location>
        <position position="116"/>
    </location>
    <ligand>
        <name>tRNA</name>
        <dbReference type="ChEBI" id="CHEBI:17843"/>
    </ligand>
</feature>
<feature type="site" description="Discriminates between blocked and unblocked aminoacyl-tRNA" evidence="1">
    <location>
        <position position="12"/>
    </location>
</feature>
<feature type="site" description="Stabilizes the basic form of H active site to accept a proton" evidence="1">
    <location>
        <position position="95"/>
    </location>
</feature>
<dbReference type="EC" id="3.1.1.29" evidence="1"/>
<dbReference type="EMBL" id="BX936398">
    <property type="protein sequence ID" value="CAH21237.1"/>
    <property type="molecule type" value="Genomic_DNA"/>
</dbReference>
<dbReference type="RefSeq" id="WP_002218168.1">
    <property type="nucleotide sequence ID" value="NZ_CP009712.1"/>
</dbReference>
<dbReference type="SMR" id="Q66AY1"/>
<dbReference type="GeneID" id="96665494"/>
<dbReference type="KEGG" id="ypo:BZ17_468"/>
<dbReference type="KEGG" id="yps:YPTB1999"/>
<dbReference type="PATRIC" id="fig|273123.14.peg.499"/>
<dbReference type="Proteomes" id="UP000001011">
    <property type="component" value="Chromosome"/>
</dbReference>
<dbReference type="GO" id="GO:0005737">
    <property type="term" value="C:cytoplasm"/>
    <property type="evidence" value="ECO:0007669"/>
    <property type="project" value="UniProtKB-SubCell"/>
</dbReference>
<dbReference type="GO" id="GO:0004045">
    <property type="term" value="F:peptidyl-tRNA hydrolase activity"/>
    <property type="evidence" value="ECO:0007669"/>
    <property type="project" value="UniProtKB-UniRule"/>
</dbReference>
<dbReference type="GO" id="GO:0000049">
    <property type="term" value="F:tRNA binding"/>
    <property type="evidence" value="ECO:0007669"/>
    <property type="project" value="UniProtKB-UniRule"/>
</dbReference>
<dbReference type="GO" id="GO:0006515">
    <property type="term" value="P:protein quality control for misfolded or incompletely synthesized proteins"/>
    <property type="evidence" value="ECO:0007669"/>
    <property type="project" value="UniProtKB-UniRule"/>
</dbReference>
<dbReference type="GO" id="GO:0072344">
    <property type="term" value="P:rescue of stalled ribosome"/>
    <property type="evidence" value="ECO:0007669"/>
    <property type="project" value="UniProtKB-UniRule"/>
</dbReference>
<dbReference type="CDD" id="cd00462">
    <property type="entry name" value="PTH"/>
    <property type="match status" value="1"/>
</dbReference>
<dbReference type="FunFam" id="3.40.50.1470:FF:000001">
    <property type="entry name" value="Peptidyl-tRNA hydrolase"/>
    <property type="match status" value="1"/>
</dbReference>
<dbReference type="Gene3D" id="3.40.50.1470">
    <property type="entry name" value="Peptidyl-tRNA hydrolase"/>
    <property type="match status" value="1"/>
</dbReference>
<dbReference type="HAMAP" id="MF_00083">
    <property type="entry name" value="Pept_tRNA_hydro_bact"/>
    <property type="match status" value="1"/>
</dbReference>
<dbReference type="InterPro" id="IPR001328">
    <property type="entry name" value="Pept_tRNA_hydro"/>
</dbReference>
<dbReference type="InterPro" id="IPR018171">
    <property type="entry name" value="Pept_tRNA_hydro_CS"/>
</dbReference>
<dbReference type="InterPro" id="IPR036416">
    <property type="entry name" value="Pept_tRNA_hydro_sf"/>
</dbReference>
<dbReference type="NCBIfam" id="TIGR00447">
    <property type="entry name" value="pth"/>
    <property type="match status" value="1"/>
</dbReference>
<dbReference type="PANTHER" id="PTHR17224">
    <property type="entry name" value="PEPTIDYL-TRNA HYDROLASE"/>
    <property type="match status" value="1"/>
</dbReference>
<dbReference type="PANTHER" id="PTHR17224:SF1">
    <property type="entry name" value="PEPTIDYL-TRNA HYDROLASE"/>
    <property type="match status" value="1"/>
</dbReference>
<dbReference type="Pfam" id="PF01195">
    <property type="entry name" value="Pept_tRNA_hydro"/>
    <property type="match status" value="1"/>
</dbReference>
<dbReference type="SUPFAM" id="SSF53178">
    <property type="entry name" value="Peptidyl-tRNA hydrolase-like"/>
    <property type="match status" value="1"/>
</dbReference>
<dbReference type="PROSITE" id="PS01195">
    <property type="entry name" value="PEPT_TRNA_HYDROL_1"/>
    <property type="match status" value="1"/>
</dbReference>
<dbReference type="PROSITE" id="PS01196">
    <property type="entry name" value="PEPT_TRNA_HYDROL_2"/>
    <property type="match status" value="1"/>
</dbReference>